<evidence type="ECO:0000256" key="1">
    <source>
        <dbReference type="SAM" id="MobiDB-lite"/>
    </source>
</evidence>
<evidence type="ECO:0000269" key="2">
    <source>
    </source>
</evidence>
<evidence type="ECO:0000305" key="3"/>
<dbReference type="EMBL" id="Y00416">
    <property type="protein sequence ID" value="CAA68473.1"/>
    <property type="molecule type" value="mRNA"/>
</dbReference>
<dbReference type="EMBL" id="M26676">
    <property type="protein sequence ID" value="AAA48817.1"/>
    <property type="molecule type" value="mRNA"/>
</dbReference>
<dbReference type="EMBL" id="J03229">
    <property type="protein sequence ID" value="AAA48816.1"/>
    <property type="molecule type" value="Genomic_DNA"/>
</dbReference>
<dbReference type="PIR" id="A29951">
    <property type="entry name" value="NSCHH7"/>
</dbReference>
<dbReference type="RefSeq" id="NP_001072953.1">
    <property type="nucleotide sequence ID" value="NM_001079485.1"/>
</dbReference>
<dbReference type="FunCoup" id="P02314">
    <property type="interactions" value="1144"/>
</dbReference>
<dbReference type="STRING" id="9031.ENSGALP00000045393"/>
<dbReference type="PaxDb" id="9031-ENSGALP00000000503"/>
<dbReference type="GeneID" id="768675"/>
<dbReference type="KEGG" id="gga:768675"/>
<dbReference type="CTD" id="10473"/>
<dbReference type="VEuPathDB" id="HostDB:geneid_768675"/>
<dbReference type="eggNOG" id="ENOG502S5FK">
    <property type="taxonomic scope" value="Eukaryota"/>
</dbReference>
<dbReference type="HOGENOM" id="CLU_141985_0_2_1"/>
<dbReference type="InParanoid" id="P02314"/>
<dbReference type="OMA" id="SEQQHCR"/>
<dbReference type="PhylomeDB" id="P02314"/>
<dbReference type="PRO" id="PR:P02314"/>
<dbReference type="Proteomes" id="UP000000539">
    <property type="component" value="Chromosome 23"/>
</dbReference>
<dbReference type="Bgee" id="ENSGALG00000032207">
    <property type="expression patterns" value="Expressed in spermatid and 12 other cell types or tissues"/>
</dbReference>
<dbReference type="GO" id="GO:0000785">
    <property type="term" value="C:chromatin"/>
    <property type="evidence" value="ECO:0007669"/>
    <property type="project" value="InterPro"/>
</dbReference>
<dbReference type="GO" id="GO:0005634">
    <property type="term" value="C:nucleus"/>
    <property type="evidence" value="ECO:0000318"/>
    <property type="project" value="GO_Central"/>
</dbReference>
<dbReference type="GO" id="GO:0003682">
    <property type="term" value="F:chromatin binding"/>
    <property type="evidence" value="ECO:0000318"/>
    <property type="project" value="GO_Central"/>
</dbReference>
<dbReference type="GO" id="GO:0031492">
    <property type="term" value="F:nucleosomal DNA binding"/>
    <property type="evidence" value="ECO:0007669"/>
    <property type="project" value="InterPro"/>
</dbReference>
<dbReference type="GO" id="GO:0006325">
    <property type="term" value="P:chromatin organization"/>
    <property type="evidence" value="ECO:0000318"/>
    <property type="project" value="GO_Central"/>
</dbReference>
<dbReference type="InterPro" id="IPR000079">
    <property type="entry name" value="HMGN_fam"/>
</dbReference>
<dbReference type="PANTHER" id="PTHR23087:SF13">
    <property type="entry name" value="NON-HISTONE CHROMOSOMAL PROTEIN HMG-17"/>
    <property type="match status" value="1"/>
</dbReference>
<dbReference type="PANTHER" id="PTHR23087">
    <property type="entry name" value="NONHISTONE CHROMOSOMAL PROTEIN HMG"/>
    <property type="match status" value="1"/>
</dbReference>
<dbReference type="Pfam" id="PF01101">
    <property type="entry name" value="HMG14_17"/>
    <property type="match status" value="1"/>
</dbReference>
<dbReference type="PRINTS" id="PR00925">
    <property type="entry name" value="NONHISHMG17"/>
</dbReference>
<dbReference type="SMART" id="SM00527">
    <property type="entry name" value="HMG17"/>
    <property type="match status" value="1"/>
</dbReference>
<dbReference type="PROSITE" id="PS00355">
    <property type="entry name" value="HMG14_17"/>
    <property type="match status" value="1"/>
</dbReference>
<name>HMGN2_CHICK</name>
<feature type="initiator methionine" description="Removed" evidence="2">
    <location>
        <position position="1"/>
    </location>
</feature>
<feature type="chain" id="PRO_0000206702" description="Non-histone chromosomal protein HMG-17">
    <location>
        <begin position="2"/>
        <end position="90"/>
    </location>
</feature>
<feature type="region of interest" description="Disordered" evidence="1">
    <location>
        <begin position="1"/>
        <end position="90"/>
    </location>
</feature>
<feature type="compositionally biased region" description="Basic and acidic residues" evidence="1">
    <location>
        <begin position="1"/>
        <end position="23"/>
    </location>
</feature>
<feature type="compositionally biased region" description="Basic and acidic residues" evidence="1">
    <location>
        <begin position="37"/>
        <end position="64"/>
    </location>
</feature>
<feature type="compositionally biased region" description="Basic and acidic residues" evidence="1">
    <location>
        <begin position="73"/>
        <end position="90"/>
    </location>
</feature>
<feature type="sequence conflict" description="In Ref. 5; AA sequence." evidence="3" ref="5">
    <original>Q</original>
    <variation>E</variation>
    <location>
        <position position="81"/>
    </location>
</feature>
<comment type="function">
    <text>Binds to the inner side of the nucleosomal DNA thus altering the interaction between the DNA and the histone octamer. May be involved in the process which maintains transcribable genes in a unique chromatin conformation.</text>
</comment>
<comment type="subcellular location">
    <subcellularLocation>
        <location>Nucleus</location>
    </subcellularLocation>
</comment>
<comment type="similarity">
    <text evidence="3">Belongs to the HMGN family.</text>
</comment>
<sequence>MPKRKAEGDTKGDKAKVKDEPQRRSARLSAKPAPPKPEPKPKKAAPKKSEKVPKGKKGKADAGKEGNNPAENGDAKTDQAQKAEGAGDAK</sequence>
<proteinExistence type="evidence at protein level"/>
<organism>
    <name type="scientific">Gallus gallus</name>
    <name type="common">Chicken</name>
    <dbReference type="NCBI Taxonomy" id="9031"/>
    <lineage>
        <taxon>Eukaryota</taxon>
        <taxon>Metazoa</taxon>
        <taxon>Chordata</taxon>
        <taxon>Craniata</taxon>
        <taxon>Vertebrata</taxon>
        <taxon>Euteleostomi</taxon>
        <taxon>Archelosauria</taxon>
        <taxon>Archosauria</taxon>
        <taxon>Dinosauria</taxon>
        <taxon>Saurischia</taxon>
        <taxon>Theropoda</taxon>
        <taxon>Coelurosauria</taxon>
        <taxon>Aves</taxon>
        <taxon>Neognathae</taxon>
        <taxon>Galloanserae</taxon>
        <taxon>Galliformes</taxon>
        <taxon>Phasianidae</taxon>
        <taxon>Phasianinae</taxon>
        <taxon>Gallus</taxon>
    </lineage>
</organism>
<reference key="1">
    <citation type="journal article" date="1987" name="Nucleic Acids Res.">
        <title>Chicken non-histone chromosomal protein HMG-17 cDNA sequence.</title>
        <authorList>
            <person name="Landsman D."/>
            <person name="Bustin M."/>
        </authorList>
    </citation>
    <scope>NUCLEOTIDE SEQUENCE [MRNA]</scope>
</reference>
<reference key="2">
    <citation type="journal article" date="1988" name="Gene">
        <title>Chicken chromosomal protein HMG-14 and HMG-17 cDNA clones: isolation, characterization and sequence comparison.</title>
        <authorList>
            <person name="Dodgson J.B."/>
            <person name="Browne D.L."/>
            <person name="Black A.J."/>
        </authorList>
    </citation>
    <scope>NUCLEOTIDE SEQUENCE [MRNA]</scope>
</reference>
<reference key="3">
    <citation type="journal article" date="1988" name="J. Biol. Chem.">
        <title>Single copy gene for the chicken non-histone chromosomal protein HMG-17.</title>
        <authorList>
            <person name="Landsman D."/>
            <person name="Srikantha T."/>
            <person name="Bustin M."/>
        </authorList>
    </citation>
    <scope>NUCLEOTIDE SEQUENCE [GENOMIC DNA]</scope>
</reference>
<reference key="4">
    <citation type="journal article" date="1980" name="Biochem. J.">
        <title>The isolation, characterization and partial sequences of the chicken erythrocyte non-histone chromosomal proteins HMG14 and HMG17. Comparison with the homologous calf thymus proteins.</title>
        <authorList>
            <person name="Walker J.M."/>
            <person name="Johns E.W."/>
        </authorList>
    </citation>
    <scope>PROTEIN SEQUENCE OF 2-39</scope>
</reference>
<reference key="5">
    <citation type="journal article" date="1980" name="FEBS Lett.">
        <title>The primary structure of non-histone chromosomal protein HMG17 from chicken erythrocyte nuclei.</title>
        <authorList>
            <person name="Walker J.M."/>
            <person name="Stearn C."/>
            <person name="Johns E.W."/>
        </authorList>
    </citation>
    <scope>PROTEIN SEQUENCE OF 29-90</scope>
</reference>
<keyword id="KW-0903">Direct protein sequencing</keyword>
<keyword id="KW-0238">DNA-binding</keyword>
<keyword id="KW-0539">Nucleus</keyword>
<keyword id="KW-1185">Reference proteome</keyword>
<accession>P02314</accession>
<protein>
    <recommendedName>
        <fullName>Non-histone chromosomal protein HMG-17</fullName>
    </recommendedName>
    <alternativeName>
        <fullName>High mobility group nucleosome-binding domain-containing protein 2</fullName>
    </alternativeName>
</protein>
<gene>
    <name type="primary">HMGN2</name>
    <name type="synonym">HMG17</name>
</gene>